<name>URE2_PSEU2</name>
<keyword id="KW-0963">Cytoplasm</keyword>
<keyword id="KW-0378">Hydrolase</keyword>
<proteinExistence type="inferred from homology"/>
<evidence type="ECO:0000255" key="1">
    <source>
        <dbReference type="HAMAP-Rule" id="MF_01954"/>
    </source>
</evidence>
<protein>
    <recommendedName>
        <fullName evidence="1">Urease subunit beta</fullName>
        <ecNumber evidence="1">3.5.1.5</ecNumber>
    </recommendedName>
    <alternativeName>
        <fullName evidence="1">Urea amidohydrolase subunit beta</fullName>
    </alternativeName>
</protein>
<gene>
    <name evidence="1" type="primary">ureB</name>
    <name type="ordered locus">Psyr_4435</name>
</gene>
<feature type="chain" id="PRO_0000234265" description="Urease subunit beta">
    <location>
        <begin position="1"/>
        <end position="101"/>
    </location>
</feature>
<dbReference type="EC" id="3.5.1.5" evidence="1"/>
<dbReference type="EMBL" id="CP000075">
    <property type="protein sequence ID" value="AAY39465.1"/>
    <property type="molecule type" value="Genomic_DNA"/>
</dbReference>
<dbReference type="RefSeq" id="WP_003391866.1">
    <property type="nucleotide sequence ID" value="NC_007005.1"/>
</dbReference>
<dbReference type="RefSeq" id="YP_237503.1">
    <property type="nucleotide sequence ID" value="NC_007005.1"/>
</dbReference>
<dbReference type="SMR" id="Q4ZN07"/>
<dbReference type="STRING" id="205918.Psyr_4435"/>
<dbReference type="KEGG" id="psb:Psyr_4435"/>
<dbReference type="PATRIC" id="fig|205918.7.peg.4577"/>
<dbReference type="eggNOG" id="COG0832">
    <property type="taxonomic scope" value="Bacteria"/>
</dbReference>
<dbReference type="HOGENOM" id="CLU_129707_1_1_6"/>
<dbReference type="OrthoDB" id="9797217at2"/>
<dbReference type="UniPathway" id="UPA00258">
    <property type="reaction ID" value="UER00370"/>
</dbReference>
<dbReference type="Proteomes" id="UP000000426">
    <property type="component" value="Chromosome"/>
</dbReference>
<dbReference type="GO" id="GO:0035550">
    <property type="term" value="C:urease complex"/>
    <property type="evidence" value="ECO:0007669"/>
    <property type="project" value="InterPro"/>
</dbReference>
<dbReference type="GO" id="GO:0009039">
    <property type="term" value="F:urease activity"/>
    <property type="evidence" value="ECO:0007669"/>
    <property type="project" value="UniProtKB-UniRule"/>
</dbReference>
<dbReference type="GO" id="GO:0043419">
    <property type="term" value="P:urea catabolic process"/>
    <property type="evidence" value="ECO:0007669"/>
    <property type="project" value="UniProtKB-UniRule"/>
</dbReference>
<dbReference type="CDD" id="cd00407">
    <property type="entry name" value="Urease_beta"/>
    <property type="match status" value="1"/>
</dbReference>
<dbReference type="FunFam" id="2.10.150.10:FF:000001">
    <property type="entry name" value="Urease subunit beta"/>
    <property type="match status" value="1"/>
</dbReference>
<dbReference type="Gene3D" id="2.10.150.10">
    <property type="entry name" value="Urease, beta subunit"/>
    <property type="match status" value="1"/>
</dbReference>
<dbReference type="HAMAP" id="MF_01954">
    <property type="entry name" value="Urease_beta"/>
    <property type="match status" value="1"/>
</dbReference>
<dbReference type="InterPro" id="IPR002019">
    <property type="entry name" value="Urease_beta-like"/>
</dbReference>
<dbReference type="InterPro" id="IPR036461">
    <property type="entry name" value="Urease_betasu_sf"/>
</dbReference>
<dbReference type="InterPro" id="IPR050069">
    <property type="entry name" value="Urease_subunit"/>
</dbReference>
<dbReference type="NCBIfam" id="NF009682">
    <property type="entry name" value="PRK13203.1"/>
    <property type="match status" value="1"/>
</dbReference>
<dbReference type="NCBIfam" id="TIGR00192">
    <property type="entry name" value="urease_beta"/>
    <property type="match status" value="1"/>
</dbReference>
<dbReference type="PANTHER" id="PTHR33569">
    <property type="entry name" value="UREASE"/>
    <property type="match status" value="1"/>
</dbReference>
<dbReference type="PANTHER" id="PTHR33569:SF1">
    <property type="entry name" value="UREASE"/>
    <property type="match status" value="1"/>
</dbReference>
<dbReference type="Pfam" id="PF00699">
    <property type="entry name" value="Urease_beta"/>
    <property type="match status" value="1"/>
</dbReference>
<dbReference type="SUPFAM" id="SSF51278">
    <property type="entry name" value="Urease, beta-subunit"/>
    <property type="match status" value="1"/>
</dbReference>
<organism>
    <name type="scientific">Pseudomonas syringae pv. syringae (strain B728a)</name>
    <dbReference type="NCBI Taxonomy" id="205918"/>
    <lineage>
        <taxon>Bacteria</taxon>
        <taxon>Pseudomonadati</taxon>
        <taxon>Pseudomonadota</taxon>
        <taxon>Gammaproteobacteria</taxon>
        <taxon>Pseudomonadales</taxon>
        <taxon>Pseudomonadaceae</taxon>
        <taxon>Pseudomonas</taxon>
        <taxon>Pseudomonas syringae</taxon>
    </lineage>
</organism>
<sequence length="101" mass="11062">MIPGQYQIQPGDIELNAGRRTLSLTVANSGDRPIQVGSHFHFFETNDALTFDRAASRGMRLNIPAGTAVRFEPGQSREVELVDLAGLRKVYGFAGRVMGEL</sequence>
<comment type="catalytic activity">
    <reaction evidence="1">
        <text>urea + 2 H2O + H(+) = hydrogencarbonate + 2 NH4(+)</text>
        <dbReference type="Rhea" id="RHEA:20557"/>
        <dbReference type="ChEBI" id="CHEBI:15377"/>
        <dbReference type="ChEBI" id="CHEBI:15378"/>
        <dbReference type="ChEBI" id="CHEBI:16199"/>
        <dbReference type="ChEBI" id="CHEBI:17544"/>
        <dbReference type="ChEBI" id="CHEBI:28938"/>
        <dbReference type="EC" id="3.5.1.5"/>
    </reaction>
</comment>
<comment type="pathway">
    <text evidence="1">Nitrogen metabolism; urea degradation; CO(2) and NH(3) from urea (urease route): step 1/1.</text>
</comment>
<comment type="subunit">
    <text evidence="1">Heterotrimer of UreA (gamma), UreB (beta) and UreC (alpha) subunits. Three heterotrimers associate to form the active enzyme.</text>
</comment>
<comment type="subcellular location">
    <subcellularLocation>
        <location evidence="1">Cytoplasm</location>
    </subcellularLocation>
</comment>
<comment type="similarity">
    <text evidence="1">Belongs to the urease beta subunit family.</text>
</comment>
<reference key="1">
    <citation type="journal article" date="2005" name="Proc. Natl. Acad. Sci. U.S.A.">
        <title>Comparison of the complete genome sequences of Pseudomonas syringae pv. syringae B728a and pv. tomato DC3000.</title>
        <authorList>
            <person name="Feil H."/>
            <person name="Feil W.S."/>
            <person name="Chain P."/>
            <person name="Larimer F."/>
            <person name="Dibartolo G."/>
            <person name="Copeland A."/>
            <person name="Lykidis A."/>
            <person name="Trong S."/>
            <person name="Nolan M."/>
            <person name="Goltsman E."/>
            <person name="Thiel J."/>
            <person name="Malfatti S."/>
            <person name="Loper J.E."/>
            <person name="Lapidus A."/>
            <person name="Detter J.C."/>
            <person name="Land M."/>
            <person name="Richardson P.M."/>
            <person name="Kyrpides N.C."/>
            <person name="Ivanova N."/>
            <person name="Lindow S.E."/>
        </authorList>
    </citation>
    <scope>NUCLEOTIDE SEQUENCE [LARGE SCALE GENOMIC DNA]</scope>
    <source>
        <strain>B728a</strain>
    </source>
</reference>
<accession>Q4ZN07</accession>